<evidence type="ECO:0000255" key="1">
    <source>
        <dbReference type="HAMAP-Rule" id="MF_01310"/>
    </source>
</evidence>
<evidence type="ECO:0000305" key="2"/>
<name>RS11_SYNR3</name>
<dbReference type="EMBL" id="CT978603">
    <property type="protein sequence ID" value="CAK29041.1"/>
    <property type="molecule type" value="Genomic_DNA"/>
</dbReference>
<dbReference type="SMR" id="A5GVY2"/>
<dbReference type="STRING" id="316278.SynRCC307_2138"/>
<dbReference type="KEGG" id="syr:SynRCC307_2138"/>
<dbReference type="eggNOG" id="COG0100">
    <property type="taxonomic scope" value="Bacteria"/>
</dbReference>
<dbReference type="HOGENOM" id="CLU_072439_5_0_3"/>
<dbReference type="OrthoDB" id="9806415at2"/>
<dbReference type="Proteomes" id="UP000001115">
    <property type="component" value="Chromosome"/>
</dbReference>
<dbReference type="GO" id="GO:1990904">
    <property type="term" value="C:ribonucleoprotein complex"/>
    <property type="evidence" value="ECO:0007669"/>
    <property type="project" value="UniProtKB-KW"/>
</dbReference>
<dbReference type="GO" id="GO:0005840">
    <property type="term" value="C:ribosome"/>
    <property type="evidence" value="ECO:0007669"/>
    <property type="project" value="UniProtKB-KW"/>
</dbReference>
<dbReference type="GO" id="GO:0019843">
    <property type="term" value="F:rRNA binding"/>
    <property type="evidence" value="ECO:0007669"/>
    <property type="project" value="UniProtKB-UniRule"/>
</dbReference>
<dbReference type="GO" id="GO:0003735">
    <property type="term" value="F:structural constituent of ribosome"/>
    <property type="evidence" value="ECO:0007669"/>
    <property type="project" value="InterPro"/>
</dbReference>
<dbReference type="GO" id="GO:0006412">
    <property type="term" value="P:translation"/>
    <property type="evidence" value="ECO:0007669"/>
    <property type="project" value="UniProtKB-UniRule"/>
</dbReference>
<dbReference type="FunFam" id="3.30.420.80:FF:000001">
    <property type="entry name" value="30S ribosomal protein S11"/>
    <property type="match status" value="1"/>
</dbReference>
<dbReference type="Gene3D" id="3.30.420.80">
    <property type="entry name" value="Ribosomal protein S11"/>
    <property type="match status" value="1"/>
</dbReference>
<dbReference type="HAMAP" id="MF_01310">
    <property type="entry name" value="Ribosomal_uS11"/>
    <property type="match status" value="1"/>
</dbReference>
<dbReference type="InterPro" id="IPR001971">
    <property type="entry name" value="Ribosomal_uS11"/>
</dbReference>
<dbReference type="InterPro" id="IPR019981">
    <property type="entry name" value="Ribosomal_uS11_bac-type"/>
</dbReference>
<dbReference type="InterPro" id="IPR018102">
    <property type="entry name" value="Ribosomal_uS11_CS"/>
</dbReference>
<dbReference type="InterPro" id="IPR036967">
    <property type="entry name" value="Ribosomal_uS11_sf"/>
</dbReference>
<dbReference type="NCBIfam" id="NF003698">
    <property type="entry name" value="PRK05309.1"/>
    <property type="match status" value="1"/>
</dbReference>
<dbReference type="NCBIfam" id="TIGR03632">
    <property type="entry name" value="uS11_bact"/>
    <property type="match status" value="1"/>
</dbReference>
<dbReference type="PANTHER" id="PTHR11759">
    <property type="entry name" value="40S RIBOSOMAL PROTEIN S14/30S RIBOSOMAL PROTEIN S11"/>
    <property type="match status" value="1"/>
</dbReference>
<dbReference type="Pfam" id="PF00411">
    <property type="entry name" value="Ribosomal_S11"/>
    <property type="match status" value="1"/>
</dbReference>
<dbReference type="PIRSF" id="PIRSF002131">
    <property type="entry name" value="Ribosomal_S11"/>
    <property type="match status" value="1"/>
</dbReference>
<dbReference type="SUPFAM" id="SSF53137">
    <property type="entry name" value="Translational machinery components"/>
    <property type="match status" value="1"/>
</dbReference>
<dbReference type="PROSITE" id="PS00054">
    <property type="entry name" value="RIBOSOMAL_S11"/>
    <property type="match status" value="1"/>
</dbReference>
<sequence length="129" mass="13669">MAKTAKKGPKKAKRNVPNGVAHIQSTFNNTIVSITDTAGEVIAWSSAGASGFKGARKGTPFAAQTAAEAAARRALEQGMRQIEVLVRGPGSGRETAIRALQVAGLEITLIRDVTPLPHNGCRRAKRRRV</sequence>
<organism>
    <name type="scientific">Synechococcus sp. (strain RCC307)</name>
    <dbReference type="NCBI Taxonomy" id="316278"/>
    <lineage>
        <taxon>Bacteria</taxon>
        <taxon>Bacillati</taxon>
        <taxon>Cyanobacteriota</taxon>
        <taxon>Cyanophyceae</taxon>
        <taxon>Synechococcales</taxon>
        <taxon>Synechococcaceae</taxon>
        <taxon>Synechococcus</taxon>
    </lineage>
</organism>
<accession>A5GVY2</accession>
<proteinExistence type="inferred from homology"/>
<comment type="function">
    <text evidence="1">Located on the platform of the 30S subunit, it bridges several disparate RNA helices of the 16S rRNA. Forms part of the Shine-Dalgarno cleft in the 70S ribosome.</text>
</comment>
<comment type="subunit">
    <text evidence="1">Part of the 30S ribosomal subunit. Interacts with proteins S7 and S18. Binds to IF-3.</text>
</comment>
<comment type="similarity">
    <text evidence="1">Belongs to the universal ribosomal protein uS11 family.</text>
</comment>
<protein>
    <recommendedName>
        <fullName evidence="1">Small ribosomal subunit protein uS11</fullName>
    </recommendedName>
    <alternativeName>
        <fullName evidence="2">30S ribosomal protein S11</fullName>
    </alternativeName>
</protein>
<gene>
    <name evidence="1" type="primary">rpsK</name>
    <name evidence="1" type="synonym">rps11</name>
    <name type="ordered locus">SynRCC307_2138</name>
</gene>
<reference key="1">
    <citation type="submission" date="2006-05" db="EMBL/GenBank/DDBJ databases">
        <authorList>
            <consortium name="Genoscope"/>
        </authorList>
    </citation>
    <scope>NUCLEOTIDE SEQUENCE [LARGE SCALE GENOMIC DNA]</scope>
    <source>
        <strain>RCC307</strain>
    </source>
</reference>
<feature type="chain" id="PRO_1000051860" description="Small ribosomal subunit protein uS11">
    <location>
        <begin position="1"/>
        <end position="129"/>
    </location>
</feature>
<keyword id="KW-1185">Reference proteome</keyword>
<keyword id="KW-0687">Ribonucleoprotein</keyword>
<keyword id="KW-0689">Ribosomal protein</keyword>
<keyword id="KW-0694">RNA-binding</keyword>
<keyword id="KW-0699">rRNA-binding</keyword>